<feature type="chain" id="PRO_1000006180" description="Elongation factor Ts">
    <location>
        <begin position="1"/>
        <end position="283"/>
    </location>
</feature>
<feature type="region of interest" description="Involved in Mg(2+) ion dislocation from EF-Tu" evidence="1">
    <location>
        <begin position="79"/>
        <end position="82"/>
    </location>
</feature>
<reference key="1">
    <citation type="submission" date="2006-08" db="EMBL/GenBank/DDBJ databases">
        <title>Complete sequence of Shewanella sp. MR-4.</title>
        <authorList>
            <consortium name="US DOE Joint Genome Institute"/>
            <person name="Copeland A."/>
            <person name="Lucas S."/>
            <person name="Lapidus A."/>
            <person name="Barry K."/>
            <person name="Detter J.C."/>
            <person name="Glavina del Rio T."/>
            <person name="Hammon N."/>
            <person name="Israni S."/>
            <person name="Dalin E."/>
            <person name="Tice H."/>
            <person name="Pitluck S."/>
            <person name="Kiss H."/>
            <person name="Brettin T."/>
            <person name="Bruce D."/>
            <person name="Han C."/>
            <person name="Tapia R."/>
            <person name="Gilna P."/>
            <person name="Schmutz J."/>
            <person name="Larimer F."/>
            <person name="Land M."/>
            <person name="Hauser L."/>
            <person name="Kyrpides N."/>
            <person name="Mikhailova N."/>
            <person name="Nealson K."/>
            <person name="Konstantinidis K."/>
            <person name="Klappenbach J."/>
            <person name="Tiedje J."/>
            <person name="Richardson P."/>
        </authorList>
    </citation>
    <scope>NUCLEOTIDE SEQUENCE [LARGE SCALE GENOMIC DNA]</scope>
    <source>
        <strain>MR-4</strain>
    </source>
</reference>
<name>EFTS_SHESM</name>
<protein>
    <recommendedName>
        <fullName evidence="1">Elongation factor Ts</fullName>
        <shortName evidence="1">EF-Ts</shortName>
    </recommendedName>
</protein>
<comment type="function">
    <text evidence="1">Associates with the EF-Tu.GDP complex and induces the exchange of GDP to GTP. It remains bound to the aminoacyl-tRNA.EF-Tu.GTP complex up to the GTP hydrolysis stage on the ribosome.</text>
</comment>
<comment type="subcellular location">
    <subcellularLocation>
        <location evidence="1">Cytoplasm</location>
    </subcellularLocation>
</comment>
<comment type="similarity">
    <text evidence="1">Belongs to the EF-Ts family.</text>
</comment>
<sequence>MAISAAQVKELRERTGAGMMDCKKALEETNGDMELAIDNMRKSGAAKAAKKAGNIAADGTILIKNGEGFAVLLEVNCQTDFVAKDANFLGFANAVLDVAAASKVSLEDLKAQFEEARVALVAKIGENINVRRVEYIDGTQLASYRHGERIGVVVTGEADEETLKHLAMHVAASKPEYVNPEDVPADVVAREQALQIEISMNEGKPAEIAEKMVVGRMKKFTGEISLTGQAYIMEPKKTVGEFLKEKGAKVTNFIRLEVGEGIEKKEEDFAAEVAAQIAASKKA</sequence>
<gene>
    <name evidence="1" type="primary">tsf</name>
    <name type="ordered locus">Shewmr4_2640</name>
</gene>
<evidence type="ECO:0000255" key="1">
    <source>
        <dbReference type="HAMAP-Rule" id="MF_00050"/>
    </source>
</evidence>
<keyword id="KW-0963">Cytoplasm</keyword>
<keyword id="KW-0251">Elongation factor</keyword>
<keyword id="KW-0648">Protein biosynthesis</keyword>
<accession>Q0HGV6</accession>
<organism>
    <name type="scientific">Shewanella sp. (strain MR-4)</name>
    <dbReference type="NCBI Taxonomy" id="60480"/>
    <lineage>
        <taxon>Bacteria</taxon>
        <taxon>Pseudomonadati</taxon>
        <taxon>Pseudomonadota</taxon>
        <taxon>Gammaproteobacteria</taxon>
        <taxon>Alteromonadales</taxon>
        <taxon>Shewanellaceae</taxon>
        <taxon>Shewanella</taxon>
    </lineage>
</organism>
<dbReference type="EMBL" id="CP000446">
    <property type="protein sequence ID" value="ABI39711.1"/>
    <property type="molecule type" value="Genomic_DNA"/>
</dbReference>
<dbReference type="RefSeq" id="WP_011623392.1">
    <property type="nucleotide sequence ID" value="NC_008321.1"/>
</dbReference>
<dbReference type="SMR" id="Q0HGV6"/>
<dbReference type="GeneID" id="94728752"/>
<dbReference type="KEGG" id="she:Shewmr4_2640"/>
<dbReference type="HOGENOM" id="CLU_047155_0_2_6"/>
<dbReference type="GO" id="GO:0005737">
    <property type="term" value="C:cytoplasm"/>
    <property type="evidence" value="ECO:0007669"/>
    <property type="project" value="UniProtKB-SubCell"/>
</dbReference>
<dbReference type="GO" id="GO:0003746">
    <property type="term" value="F:translation elongation factor activity"/>
    <property type="evidence" value="ECO:0007669"/>
    <property type="project" value="UniProtKB-UniRule"/>
</dbReference>
<dbReference type="CDD" id="cd14275">
    <property type="entry name" value="UBA_EF-Ts"/>
    <property type="match status" value="1"/>
</dbReference>
<dbReference type="FunFam" id="1.10.286.20:FF:000001">
    <property type="entry name" value="Elongation factor Ts"/>
    <property type="match status" value="1"/>
</dbReference>
<dbReference type="FunFam" id="1.10.8.10:FF:000001">
    <property type="entry name" value="Elongation factor Ts"/>
    <property type="match status" value="1"/>
</dbReference>
<dbReference type="FunFam" id="3.30.479.20:FF:000001">
    <property type="entry name" value="Elongation factor Ts"/>
    <property type="match status" value="1"/>
</dbReference>
<dbReference type="Gene3D" id="1.10.286.20">
    <property type="match status" value="1"/>
</dbReference>
<dbReference type="Gene3D" id="1.10.8.10">
    <property type="entry name" value="DNA helicase RuvA subunit, C-terminal domain"/>
    <property type="match status" value="1"/>
</dbReference>
<dbReference type="Gene3D" id="3.30.479.20">
    <property type="entry name" value="Elongation factor Ts, dimerisation domain"/>
    <property type="match status" value="2"/>
</dbReference>
<dbReference type="HAMAP" id="MF_00050">
    <property type="entry name" value="EF_Ts"/>
    <property type="match status" value="1"/>
</dbReference>
<dbReference type="InterPro" id="IPR036402">
    <property type="entry name" value="EF-Ts_dimer_sf"/>
</dbReference>
<dbReference type="InterPro" id="IPR001816">
    <property type="entry name" value="Transl_elong_EFTs/EF1B"/>
</dbReference>
<dbReference type="InterPro" id="IPR014039">
    <property type="entry name" value="Transl_elong_EFTs/EF1B_dimer"/>
</dbReference>
<dbReference type="InterPro" id="IPR018101">
    <property type="entry name" value="Transl_elong_Ts_CS"/>
</dbReference>
<dbReference type="InterPro" id="IPR009060">
    <property type="entry name" value="UBA-like_sf"/>
</dbReference>
<dbReference type="NCBIfam" id="TIGR00116">
    <property type="entry name" value="tsf"/>
    <property type="match status" value="1"/>
</dbReference>
<dbReference type="PANTHER" id="PTHR11741">
    <property type="entry name" value="ELONGATION FACTOR TS"/>
    <property type="match status" value="1"/>
</dbReference>
<dbReference type="PANTHER" id="PTHR11741:SF0">
    <property type="entry name" value="ELONGATION FACTOR TS, MITOCHONDRIAL"/>
    <property type="match status" value="1"/>
</dbReference>
<dbReference type="Pfam" id="PF00889">
    <property type="entry name" value="EF_TS"/>
    <property type="match status" value="1"/>
</dbReference>
<dbReference type="SUPFAM" id="SSF54713">
    <property type="entry name" value="Elongation factor Ts (EF-Ts), dimerisation domain"/>
    <property type="match status" value="2"/>
</dbReference>
<dbReference type="SUPFAM" id="SSF46934">
    <property type="entry name" value="UBA-like"/>
    <property type="match status" value="1"/>
</dbReference>
<dbReference type="PROSITE" id="PS01126">
    <property type="entry name" value="EF_TS_1"/>
    <property type="match status" value="1"/>
</dbReference>
<dbReference type="PROSITE" id="PS01127">
    <property type="entry name" value="EF_TS_2"/>
    <property type="match status" value="1"/>
</dbReference>
<proteinExistence type="inferred from homology"/>